<name>LACG_STRP6</name>
<accession>Q5X9Y7</accession>
<gene>
    <name evidence="1" type="primary">lacG</name>
    <name type="ordered locus">M6_Spy1641</name>
</gene>
<proteinExistence type="inferred from homology"/>
<dbReference type="EC" id="3.2.1.85" evidence="1"/>
<dbReference type="EMBL" id="CP000003">
    <property type="protein sequence ID" value="AAT87776.1"/>
    <property type="molecule type" value="Genomic_DNA"/>
</dbReference>
<dbReference type="RefSeq" id="WP_011184962.1">
    <property type="nucleotide sequence ID" value="NC_006086.1"/>
</dbReference>
<dbReference type="SMR" id="Q5X9Y7"/>
<dbReference type="CAZy" id="GH1">
    <property type="family name" value="Glycoside Hydrolase Family 1"/>
</dbReference>
<dbReference type="KEGG" id="spa:M6_Spy1641"/>
<dbReference type="HOGENOM" id="CLU_001859_1_3_9"/>
<dbReference type="UniPathway" id="UPA00542">
    <property type="reaction ID" value="UER00605"/>
</dbReference>
<dbReference type="Proteomes" id="UP000001167">
    <property type="component" value="Chromosome"/>
</dbReference>
<dbReference type="GO" id="GO:0005829">
    <property type="term" value="C:cytosol"/>
    <property type="evidence" value="ECO:0007669"/>
    <property type="project" value="TreeGrafter"/>
</dbReference>
<dbReference type="GO" id="GO:0033920">
    <property type="term" value="F:6-phospho-beta-galactosidase activity"/>
    <property type="evidence" value="ECO:0007669"/>
    <property type="project" value="UniProtKB-UniRule"/>
</dbReference>
<dbReference type="GO" id="GO:0008422">
    <property type="term" value="F:beta-glucosidase activity"/>
    <property type="evidence" value="ECO:0007669"/>
    <property type="project" value="TreeGrafter"/>
</dbReference>
<dbReference type="GO" id="GO:0019512">
    <property type="term" value="P:lactose catabolic process via tagatose-6-phosphate"/>
    <property type="evidence" value="ECO:0007669"/>
    <property type="project" value="InterPro"/>
</dbReference>
<dbReference type="FunFam" id="3.20.20.80:FF:000004">
    <property type="entry name" value="Beta-glucosidase 6-phospho-beta-glucosidase"/>
    <property type="match status" value="1"/>
</dbReference>
<dbReference type="Gene3D" id="3.20.20.80">
    <property type="entry name" value="Glycosidases"/>
    <property type="match status" value="1"/>
</dbReference>
<dbReference type="HAMAP" id="MF_01574">
    <property type="entry name" value="LacG"/>
    <property type="match status" value="1"/>
</dbReference>
<dbReference type="InterPro" id="IPR005928">
    <property type="entry name" value="6P-beta-galactosidase"/>
</dbReference>
<dbReference type="InterPro" id="IPR001360">
    <property type="entry name" value="Glyco_hydro_1"/>
</dbReference>
<dbReference type="InterPro" id="IPR018120">
    <property type="entry name" value="Glyco_hydro_1_AS"/>
</dbReference>
<dbReference type="InterPro" id="IPR033132">
    <property type="entry name" value="Glyco_hydro_1_N_CS"/>
</dbReference>
<dbReference type="InterPro" id="IPR017853">
    <property type="entry name" value="Glycoside_hydrolase_SF"/>
</dbReference>
<dbReference type="NCBIfam" id="TIGR01233">
    <property type="entry name" value="lacG"/>
    <property type="match status" value="1"/>
</dbReference>
<dbReference type="NCBIfam" id="NF010036">
    <property type="entry name" value="PRK13511.1"/>
    <property type="match status" value="1"/>
</dbReference>
<dbReference type="PANTHER" id="PTHR10353">
    <property type="entry name" value="GLYCOSYL HYDROLASE"/>
    <property type="match status" value="1"/>
</dbReference>
<dbReference type="PANTHER" id="PTHR10353:SF36">
    <property type="entry name" value="LP05116P"/>
    <property type="match status" value="1"/>
</dbReference>
<dbReference type="Pfam" id="PF00232">
    <property type="entry name" value="Glyco_hydro_1"/>
    <property type="match status" value="1"/>
</dbReference>
<dbReference type="PRINTS" id="PR00131">
    <property type="entry name" value="GLHYDRLASE1"/>
</dbReference>
<dbReference type="SUPFAM" id="SSF51445">
    <property type="entry name" value="(Trans)glycosidases"/>
    <property type="match status" value="1"/>
</dbReference>
<dbReference type="PROSITE" id="PS00572">
    <property type="entry name" value="GLYCOSYL_HYDROL_F1_1"/>
    <property type="match status" value="1"/>
</dbReference>
<dbReference type="PROSITE" id="PS00653">
    <property type="entry name" value="GLYCOSYL_HYDROL_F1_2"/>
    <property type="match status" value="1"/>
</dbReference>
<reference key="1">
    <citation type="journal article" date="2004" name="J. Infect. Dis.">
        <title>Progress toward characterization of the group A Streptococcus metagenome: complete genome sequence of a macrolide-resistant serotype M6 strain.</title>
        <authorList>
            <person name="Banks D.J."/>
            <person name="Porcella S.F."/>
            <person name="Barbian K.D."/>
            <person name="Beres S.B."/>
            <person name="Philips L.E."/>
            <person name="Voyich J.M."/>
            <person name="DeLeo F.R."/>
            <person name="Martin J.M."/>
            <person name="Somerville G.A."/>
            <person name="Musser J.M."/>
        </authorList>
    </citation>
    <scope>NUCLEOTIDE SEQUENCE [LARGE SCALE GENOMIC DNA]</scope>
    <source>
        <strain>ATCC BAA-946 / MGAS10394</strain>
    </source>
</reference>
<evidence type="ECO:0000255" key="1">
    <source>
        <dbReference type="HAMAP-Rule" id="MF_01574"/>
    </source>
</evidence>
<organism>
    <name type="scientific">Streptococcus pyogenes serotype M6 (strain ATCC BAA-946 / MGAS10394)</name>
    <dbReference type="NCBI Taxonomy" id="286636"/>
    <lineage>
        <taxon>Bacteria</taxon>
        <taxon>Bacillati</taxon>
        <taxon>Bacillota</taxon>
        <taxon>Bacilli</taxon>
        <taxon>Lactobacillales</taxon>
        <taxon>Streptococcaceae</taxon>
        <taxon>Streptococcus</taxon>
    </lineage>
</organism>
<comment type="catalytic activity">
    <reaction evidence="1">
        <text>a 6-phospho-beta-D-galactoside + H2O = D-galactose 6-phosphate + an alcohol</text>
        <dbReference type="Rhea" id="RHEA:24568"/>
        <dbReference type="ChEBI" id="CHEBI:15377"/>
        <dbReference type="ChEBI" id="CHEBI:30879"/>
        <dbReference type="ChEBI" id="CHEBI:58534"/>
        <dbReference type="ChEBI" id="CHEBI:91004"/>
        <dbReference type="EC" id="3.2.1.85"/>
    </reaction>
</comment>
<comment type="pathway">
    <text evidence="1">Carbohydrate metabolism; lactose degradation; D-galactose 6-phosphate and beta-D-glucose from lactose 6-phosphate: step 1/1.</text>
</comment>
<comment type="similarity">
    <text evidence="1">Belongs to the glycosyl hydrolase 1 family.</text>
</comment>
<keyword id="KW-0326">Glycosidase</keyword>
<keyword id="KW-0378">Hydrolase</keyword>
<sequence>MTKTLPKDFIFGGATAAYQAEGATHTDGKGPVAWDKYLEDNYWYTAEPASDFYNRYPVDLKLSEEFGVNGIRISIAWSRIFPTGKGEVNPKGVEYYHNLFAECHKRHVEPFVTLHHFDTPEALHSNGDFLNRENIEHFVNYAELCFKEFSEVNYWTTFNEIGPIGDGQYLVGKFPPGIQYDLAKVFQSHHNMMVSHARAVKLFKDSGYSGEIGVVHALPTKYPFDANNPDDVRAAELEDIIHNKFILDATYLGKYSDKTMEGVNHILEVNGGELDLREEDFVALDAAKDLNDFLGINYYMSDWMQAFDGETEIIHNGKGEKGSSKYQIKGVGRRKAPVDVPKTDWDWIIFPQGLYDQIMRVKADYPNYKKIYITENGLGYKDEFVDNTVYDDGRIDYVKKHLEVISDAISDGTNVKGYFMWSLMDVFSWSNGYEKRYGLFYVDFETQERYPKKSAYWYKKVAETQVIE</sequence>
<feature type="chain" id="PRO_0000260742" description="6-phospho-beta-galactosidase">
    <location>
        <begin position="1"/>
        <end position="468"/>
    </location>
</feature>
<feature type="active site" description="Proton donor" evidence="1">
    <location>
        <position position="160"/>
    </location>
</feature>
<feature type="active site" description="Nucleophile" evidence="1">
    <location>
        <position position="375"/>
    </location>
</feature>
<feature type="binding site" evidence="1">
    <location>
        <position position="19"/>
    </location>
    <ligand>
        <name>D-galactose 6-phosphate</name>
        <dbReference type="ChEBI" id="CHEBI:91004"/>
    </ligand>
</feature>
<feature type="binding site" evidence="1">
    <location>
        <position position="116"/>
    </location>
    <ligand>
        <name>D-galactose 6-phosphate</name>
        <dbReference type="ChEBI" id="CHEBI:91004"/>
    </ligand>
</feature>
<feature type="binding site" evidence="1">
    <location>
        <position position="159"/>
    </location>
    <ligand>
        <name>D-galactose 6-phosphate</name>
        <dbReference type="ChEBI" id="CHEBI:91004"/>
    </ligand>
</feature>
<feature type="binding site" evidence="1">
    <location>
        <position position="160"/>
    </location>
    <ligand>
        <name>D-galactose 6-phosphate</name>
        <dbReference type="ChEBI" id="CHEBI:91004"/>
    </ligand>
</feature>
<feature type="binding site" evidence="1">
    <location>
        <position position="297"/>
    </location>
    <ligand>
        <name>D-galactose 6-phosphate</name>
        <dbReference type="ChEBI" id="CHEBI:91004"/>
    </ligand>
</feature>
<feature type="binding site" evidence="1">
    <location>
        <position position="428"/>
    </location>
    <ligand>
        <name>D-galactose 6-phosphate</name>
        <dbReference type="ChEBI" id="CHEBI:91004"/>
    </ligand>
</feature>
<feature type="binding site" evidence="1">
    <location>
        <position position="429"/>
    </location>
    <ligand>
        <name>D-galactose 6-phosphate</name>
        <dbReference type="ChEBI" id="CHEBI:91004"/>
    </ligand>
</feature>
<feature type="binding site" evidence="1">
    <location>
        <position position="435"/>
    </location>
    <ligand>
        <name>D-galactose 6-phosphate</name>
        <dbReference type="ChEBI" id="CHEBI:91004"/>
    </ligand>
</feature>
<feature type="binding site" evidence="1">
    <location>
        <position position="437"/>
    </location>
    <ligand>
        <name>D-galactose 6-phosphate</name>
        <dbReference type="ChEBI" id="CHEBI:91004"/>
    </ligand>
</feature>
<protein>
    <recommendedName>
        <fullName evidence="1">6-phospho-beta-galactosidase</fullName>
        <ecNumber evidence="1">3.2.1.85</ecNumber>
    </recommendedName>
    <alternativeName>
        <fullName evidence="1">Beta-D-phosphogalactoside galactohydrolase</fullName>
        <shortName evidence="1">PGALase</shortName>
    </alternativeName>
    <alternativeName>
        <fullName evidence="1">P-beta-Gal</fullName>
        <shortName evidence="1">PBG</shortName>
    </alternativeName>
</protein>